<sequence length="217" mass="24618">MMAAGPRTSLLLAFALLCLPWTQVVGAFPAMSLSSLFANAVLWAQHLHQLAADTFKEFERTYIPEGQRYSIQNTQVAFCFSETIPAPTGKNEAQQKSDLELLRISLLLIQSWLGPLQFLSRVFTNSLVFGTSDRVYEKLKDLEEGILALMRELEDGTPRAGQILKQTYDKFDTNMRSDDALLKNYGLLSCFRKDLHKTETYLRVMKCRRFGEASCAF</sequence>
<feature type="signal peptide" evidence="1">
    <location>
        <begin position="1"/>
        <end position="26"/>
    </location>
</feature>
<feature type="chain" id="PRO_0000032975" description="Somatotropin">
    <location>
        <begin position="27"/>
        <end position="217"/>
    </location>
</feature>
<feature type="binding site" evidence="1">
    <location>
        <position position="46"/>
    </location>
    <ligand>
        <name>Zn(2+)</name>
        <dbReference type="ChEBI" id="CHEBI:29105"/>
    </ligand>
</feature>
<feature type="binding site" evidence="1">
    <location>
        <position position="199"/>
    </location>
    <ligand>
        <name>Zn(2+)</name>
        <dbReference type="ChEBI" id="CHEBI:29105"/>
    </ligand>
</feature>
<feature type="modified residue" description="Phosphoserine" evidence="2">
    <location>
        <position position="132"/>
    </location>
</feature>
<feature type="disulfide bond" evidence="1">
    <location>
        <begin position="79"/>
        <end position="190"/>
    </location>
</feature>
<feature type="disulfide bond" evidence="1">
    <location>
        <begin position="207"/>
        <end position="215"/>
    </location>
</feature>
<feature type="sequence conflict" description="In Ref. 1; CAA51450." evidence="3" ref="1">
    <original>A</original>
    <variation>T</variation>
    <location>
        <position position="15"/>
    </location>
</feature>
<feature type="sequence conflict" description="In Ref. 1; CAA51450." evidence="3" ref="1">
    <original>S</original>
    <variation>G</variation>
    <location>
        <position position="35"/>
    </location>
</feature>
<feature type="sequence conflict" description="In Ref. 1; CAA51450." evidence="3" ref="1">
    <original>W</original>
    <variation>R</variation>
    <location>
        <position position="43"/>
    </location>
</feature>
<feature type="sequence conflict" description="In Ref. 1; CAA51450." evidence="3" ref="1">
    <original>G</original>
    <variation>V</variation>
    <location>
        <position position="156"/>
    </location>
</feature>
<gene>
    <name type="primary">GH1</name>
    <name type="synonym">GH</name>
</gene>
<organism>
    <name type="scientific">Bubalus bubalis</name>
    <name type="common">Domestic water buffalo</name>
    <dbReference type="NCBI Taxonomy" id="89462"/>
    <lineage>
        <taxon>Eukaryota</taxon>
        <taxon>Metazoa</taxon>
        <taxon>Chordata</taxon>
        <taxon>Craniata</taxon>
        <taxon>Vertebrata</taxon>
        <taxon>Euteleostomi</taxon>
        <taxon>Mammalia</taxon>
        <taxon>Eutheria</taxon>
        <taxon>Laurasiatheria</taxon>
        <taxon>Artiodactyla</taxon>
        <taxon>Ruminantia</taxon>
        <taxon>Pecora</taxon>
        <taxon>Bovidae</taxon>
        <taxon>Bovinae</taxon>
        <taxon>Bubalus</taxon>
    </lineage>
</organism>
<accession>O18938</accession>
<reference key="1">
    <citation type="submission" date="1998-09" db="EMBL/GenBank/DDBJ databases">
        <title>Cloning and characterization of growth hormone encoding gene in Bubalus bubalis.</title>
        <authorList>
            <person name="Tiwari G."/>
            <person name="Garg L.C."/>
        </authorList>
    </citation>
    <scope>NUCLEOTIDE SEQUENCE [GENOMIC DNA]</scope>
</reference>
<reference key="2">
    <citation type="journal article" date="1999" name="DNA Seq.">
        <title>cDNA cloning and sequence analysis of bubaline growth hormone.</title>
        <authorList>
            <person name="Verma S."/>
            <person name="Ghorpade A."/>
            <person name="Tiwari G."/>
            <person name="Das P."/>
            <person name="Garg L.C."/>
        </authorList>
    </citation>
    <scope>NUCLEOTIDE SEQUENCE [MRNA]</scope>
    <source>
        <tissue>Blood</tissue>
    </source>
</reference>
<keyword id="KW-1015">Disulfide bond</keyword>
<keyword id="KW-0372">Hormone</keyword>
<keyword id="KW-0479">Metal-binding</keyword>
<keyword id="KW-0597">Phosphoprotein</keyword>
<keyword id="KW-0964">Secreted</keyword>
<keyword id="KW-0732">Signal</keyword>
<keyword id="KW-0862">Zinc</keyword>
<proteinExistence type="evidence at transcript level"/>
<protein>
    <recommendedName>
        <fullName>Somatotropin</fullName>
    </recommendedName>
    <alternativeName>
        <fullName>Growth hormone</fullName>
    </alternativeName>
</protein>
<dbReference type="EMBL" id="AJ011533">
    <property type="protein sequence ID" value="CAA09679.1"/>
    <property type="molecule type" value="Genomic_DNA"/>
</dbReference>
<dbReference type="EMBL" id="AJ011514">
    <property type="protein sequence ID" value="CAA09668.1"/>
    <property type="molecule type" value="Genomic_DNA"/>
</dbReference>
<dbReference type="EMBL" id="AJ011513">
    <property type="protein sequence ID" value="CAA09667.1"/>
    <property type="molecule type" value="Genomic_DNA"/>
</dbReference>
<dbReference type="EMBL" id="AJ000549">
    <property type="protein sequence ID" value="CAA04181.1"/>
    <property type="molecule type" value="Genomic_DNA"/>
</dbReference>
<dbReference type="EMBL" id="X72947">
    <property type="protein sequence ID" value="CAA51450.1"/>
    <property type="molecule type" value="mRNA"/>
</dbReference>
<dbReference type="PIR" id="S32682">
    <property type="entry name" value="S32682"/>
</dbReference>
<dbReference type="BMRB" id="O18938"/>
<dbReference type="SMR" id="O18938"/>
<dbReference type="GO" id="GO:0005615">
    <property type="term" value="C:extracellular space"/>
    <property type="evidence" value="ECO:0000250"/>
    <property type="project" value="AgBase"/>
</dbReference>
<dbReference type="GO" id="GO:0008083">
    <property type="term" value="F:growth factor activity"/>
    <property type="evidence" value="ECO:0007669"/>
    <property type="project" value="TreeGrafter"/>
</dbReference>
<dbReference type="GO" id="GO:0005131">
    <property type="term" value="F:growth hormone receptor binding"/>
    <property type="evidence" value="ECO:0007669"/>
    <property type="project" value="InterPro"/>
</dbReference>
<dbReference type="GO" id="GO:0005179">
    <property type="term" value="F:hormone activity"/>
    <property type="evidence" value="ECO:0007669"/>
    <property type="project" value="UniProtKB-KW"/>
</dbReference>
<dbReference type="GO" id="GO:0046872">
    <property type="term" value="F:metal ion binding"/>
    <property type="evidence" value="ECO:0007669"/>
    <property type="project" value="UniProtKB-KW"/>
</dbReference>
<dbReference type="GO" id="GO:0048513">
    <property type="term" value="P:animal organ development"/>
    <property type="evidence" value="ECO:0007669"/>
    <property type="project" value="TreeGrafter"/>
</dbReference>
<dbReference type="GO" id="GO:0060396">
    <property type="term" value="P:growth hormone receptor signaling pathway"/>
    <property type="evidence" value="ECO:0007669"/>
    <property type="project" value="TreeGrafter"/>
</dbReference>
<dbReference type="GO" id="GO:0030073">
    <property type="term" value="P:insulin secretion"/>
    <property type="evidence" value="ECO:0000250"/>
    <property type="project" value="AgBase"/>
</dbReference>
<dbReference type="GO" id="GO:0009891">
    <property type="term" value="P:positive regulation of biosynthetic process"/>
    <property type="evidence" value="ECO:0007669"/>
    <property type="project" value="UniProtKB-ARBA"/>
</dbReference>
<dbReference type="GO" id="GO:0045927">
    <property type="term" value="P:positive regulation of growth"/>
    <property type="evidence" value="ECO:0007669"/>
    <property type="project" value="TreeGrafter"/>
</dbReference>
<dbReference type="GO" id="GO:0046427">
    <property type="term" value="P:positive regulation of receptor signaling pathway via JAK-STAT"/>
    <property type="evidence" value="ECO:0007669"/>
    <property type="project" value="TreeGrafter"/>
</dbReference>
<dbReference type="GO" id="GO:0031667">
    <property type="term" value="P:response to nutrient levels"/>
    <property type="evidence" value="ECO:0007669"/>
    <property type="project" value="TreeGrafter"/>
</dbReference>
<dbReference type="CDD" id="cd10285">
    <property type="entry name" value="somatotropin_like"/>
    <property type="match status" value="1"/>
</dbReference>
<dbReference type="FunFam" id="1.20.1250.10:FF:000002">
    <property type="entry name" value="Growth hormone"/>
    <property type="match status" value="1"/>
</dbReference>
<dbReference type="Gene3D" id="1.20.1250.10">
    <property type="match status" value="1"/>
</dbReference>
<dbReference type="InterPro" id="IPR009079">
    <property type="entry name" value="4_helix_cytokine-like_core"/>
</dbReference>
<dbReference type="InterPro" id="IPR034975">
    <property type="entry name" value="Somatotropin"/>
</dbReference>
<dbReference type="InterPro" id="IPR001400">
    <property type="entry name" value="Somatotropin/Prolactin"/>
</dbReference>
<dbReference type="InterPro" id="IPR018116">
    <property type="entry name" value="Somatotropin_CS"/>
</dbReference>
<dbReference type="PANTHER" id="PTHR11417:SF2">
    <property type="entry name" value="SOMATOTROPIN"/>
    <property type="match status" value="1"/>
</dbReference>
<dbReference type="PANTHER" id="PTHR11417">
    <property type="entry name" value="SOMATOTROPIN,PROLACTIN"/>
    <property type="match status" value="1"/>
</dbReference>
<dbReference type="Pfam" id="PF00103">
    <property type="entry name" value="Hormone_1"/>
    <property type="match status" value="1"/>
</dbReference>
<dbReference type="PRINTS" id="PR00836">
    <property type="entry name" value="SOMATOTROPIN"/>
</dbReference>
<dbReference type="SUPFAM" id="SSF47266">
    <property type="entry name" value="4-helical cytokines"/>
    <property type="match status" value="1"/>
</dbReference>
<dbReference type="PROSITE" id="PS00266">
    <property type="entry name" value="SOMATOTROPIN_1"/>
    <property type="match status" value="1"/>
</dbReference>
<dbReference type="PROSITE" id="PS00338">
    <property type="entry name" value="SOMATOTROPIN_2"/>
    <property type="match status" value="1"/>
</dbReference>
<evidence type="ECO:0000250" key="1"/>
<evidence type="ECO:0000250" key="2">
    <source>
        <dbReference type="UniProtKB" id="P01241"/>
    </source>
</evidence>
<evidence type="ECO:0000305" key="3"/>
<name>SOMA_BUBBU</name>
<comment type="function">
    <text>Plays an important role in growth control. Its major role in stimulating body growth is to stimulate the liver and other tissues to secrete IGF1. It stimulates both the differentiation and proliferation of myoblasts. It also stimulates amino acid uptake and protein synthesis in muscle and other tissues.</text>
</comment>
<comment type="subcellular location">
    <subcellularLocation>
        <location>Secreted</location>
    </subcellularLocation>
</comment>
<comment type="similarity">
    <text evidence="3">Belongs to the somatotropin/prolactin family.</text>
</comment>